<organism>
    <name type="scientific">Lactococcus lactis subsp. cremoris (strain SK11)</name>
    <dbReference type="NCBI Taxonomy" id="272622"/>
    <lineage>
        <taxon>Bacteria</taxon>
        <taxon>Bacillati</taxon>
        <taxon>Bacillota</taxon>
        <taxon>Bacilli</taxon>
        <taxon>Lactobacillales</taxon>
        <taxon>Streptococcaceae</taxon>
        <taxon>Lactococcus</taxon>
        <taxon>Lactococcus cremoris subsp. cremoris</taxon>
    </lineage>
</organism>
<sequence>MKLEKLPEEFVQAQPVLEKISEHGFEAYFVGGSVRDVLLGREIHDVDIATSAYPEEIKDIFPYTIDVGIEHGTVLVLAGKSEAEHYEITTFRTESKYTDYRRPDHVDFVRDLREDLKRRDFTVNAFACDFEGQIIDLFDGLTDLKERRLTAVGSALERFNEDALRIMRAMRFASTLDFKIEEKTFSAMRERSHLLEKISVERIFIELDKLLLGSEWRNGLTLLIESEAWKYLPDFQDLALKKVLTELSVDFHFKNSEQAWAALLTRFSNIDVKVFLRKWKVSNEFSKYVADLVSAYELENWDLVSLYHFGLEKALLVDELKIAFGRDIDRERAVFINDQLQIHDKSEIVIAGKDLMDEFSLKPGPELGKILKTIEEKIVKNELKNEQIAILTEVKKMLELEK</sequence>
<evidence type="ECO:0000255" key="1">
    <source>
        <dbReference type="HAMAP-Rule" id="MF_01263"/>
    </source>
</evidence>
<dbReference type="EC" id="2.7.7.72" evidence="1"/>
<dbReference type="EMBL" id="CP000425">
    <property type="protein sequence ID" value="ABJ73150.1"/>
    <property type="molecule type" value="Genomic_DNA"/>
</dbReference>
<dbReference type="RefSeq" id="WP_011676589.1">
    <property type="nucleotide sequence ID" value="NC_008527.1"/>
</dbReference>
<dbReference type="SMR" id="Q02Y22"/>
<dbReference type="KEGG" id="llc:LACR_1653"/>
<dbReference type="HOGENOM" id="CLU_015961_3_1_9"/>
<dbReference type="Proteomes" id="UP000000240">
    <property type="component" value="Chromosome"/>
</dbReference>
<dbReference type="GO" id="GO:0005524">
    <property type="term" value="F:ATP binding"/>
    <property type="evidence" value="ECO:0007669"/>
    <property type="project" value="UniProtKB-UniRule"/>
</dbReference>
<dbReference type="GO" id="GO:0004810">
    <property type="term" value="F:CCA tRNA nucleotidyltransferase activity"/>
    <property type="evidence" value="ECO:0007669"/>
    <property type="project" value="UniProtKB-UniRule"/>
</dbReference>
<dbReference type="GO" id="GO:0000287">
    <property type="term" value="F:magnesium ion binding"/>
    <property type="evidence" value="ECO:0007669"/>
    <property type="project" value="UniProtKB-UniRule"/>
</dbReference>
<dbReference type="GO" id="GO:0000049">
    <property type="term" value="F:tRNA binding"/>
    <property type="evidence" value="ECO:0007669"/>
    <property type="project" value="UniProtKB-UniRule"/>
</dbReference>
<dbReference type="GO" id="GO:0042245">
    <property type="term" value="P:RNA repair"/>
    <property type="evidence" value="ECO:0007669"/>
    <property type="project" value="UniProtKB-KW"/>
</dbReference>
<dbReference type="GO" id="GO:0001680">
    <property type="term" value="P:tRNA 3'-terminal CCA addition"/>
    <property type="evidence" value="ECO:0007669"/>
    <property type="project" value="UniProtKB-UniRule"/>
</dbReference>
<dbReference type="CDD" id="cd05398">
    <property type="entry name" value="NT_ClassII-CCAase"/>
    <property type="match status" value="1"/>
</dbReference>
<dbReference type="Gene3D" id="1.10.110.30">
    <property type="match status" value="1"/>
</dbReference>
<dbReference type="Gene3D" id="1.10.246.80">
    <property type="match status" value="1"/>
</dbReference>
<dbReference type="Gene3D" id="1.20.58.560">
    <property type="match status" value="1"/>
</dbReference>
<dbReference type="Gene3D" id="3.30.460.10">
    <property type="entry name" value="Beta Polymerase, domain 2"/>
    <property type="match status" value="1"/>
</dbReference>
<dbReference type="HAMAP" id="MF_01263">
    <property type="entry name" value="CCA_bact_type3"/>
    <property type="match status" value="1"/>
</dbReference>
<dbReference type="InterPro" id="IPR050264">
    <property type="entry name" value="Bact_CCA-adding_enz_type3_sf"/>
</dbReference>
<dbReference type="InterPro" id="IPR032810">
    <property type="entry name" value="CCA-adding_enz_C"/>
</dbReference>
<dbReference type="InterPro" id="IPR023068">
    <property type="entry name" value="CCA-adding_enz_firmicutes"/>
</dbReference>
<dbReference type="InterPro" id="IPR043519">
    <property type="entry name" value="NT_sf"/>
</dbReference>
<dbReference type="InterPro" id="IPR002646">
    <property type="entry name" value="PolA_pol_head_dom"/>
</dbReference>
<dbReference type="InterPro" id="IPR032828">
    <property type="entry name" value="PolyA_RNA-bd"/>
</dbReference>
<dbReference type="NCBIfam" id="NF009814">
    <property type="entry name" value="PRK13299.1"/>
    <property type="match status" value="1"/>
</dbReference>
<dbReference type="PANTHER" id="PTHR46173">
    <property type="entry name" value="CCA TRNA NUCLEOTIDYLTRANSFERASE 1, MITOCHONDRIAL"/>
    <property type="match status" value="1"/>
</dbReference>
<dbReference type="PANTHER" id="PTHR46173:SF1">
    <property type="entry name" value="CCA TRNA NUCLEOTIDYLTRANSFERASE 1, MITOCHONDRIAL"/>
    <property type="match status" value="1"/>
</dbReference>
<dbReference type="Pfam" id="PF01743">
    <property type="entry name" value="PolyA_pol"/>
    <property type="match status" value="1"/>
</dbReference>
<dbReference type="Pfam" id="PF12627">
    <property type="entry name" value="PolyA_pol_RNAbd"/>
    <property type="match status" value="1"/>
</dbReference>
<dbReference type="Pfam" id="PF13735">
    <property type="entry name" value="tRNA_NucTran2_2"/>
    <property type="match status" value="1"/>
</dbReference>
<dbReference type="SUPFAM" id="SSF81301">
    <property type="entry name" value="Nucleotidyltransferase"/>
    <property type="match status" value="1"/>
</dbReference>
<dbReference type="SUPFAM" id="SSF81891">
    <property type="entry name" value="Poly A polymerase C-terminal region-like"/>
    <property type="match status" value="1"/>
</dbReference>
<comment type="function">
    <text evidence="1">Catalyzes the addition and repair of the essential 3'-terminal CCA sequence in tRNAs without using a nucleic acid template. Adds these three nucleotides in the order of C, C, and A to the tRNA nucleotide-73, using CTP and ATP as substrates and producing inorganic pyrophosphate. tRNA 3'-terminal CCA addition is required both for tRNA processing and repair. Also involved in tRNA surveillance by mediating tandem CCA addition to generate a CCACCA at the 3' terminus of unstable tRNAs. While stable tRNAs receive only 3'-terminal CCA, unstable tRNAs are marked with CCACCA and rapidly degraded.</text>
</comment>
<comment type="catalytic activity">
    <reaction evidence="1">
        <text>a tRNA precursor + 2 CTP + ATP = a tRNA with a 3' CCA end + 3 diphosphate</text>
        <dbReference type="Rhea" id="RHEA:14433"/>
        <dbReference type="Rhea" id="RHEA-COMP:10465"/>
        <dbReference type="Rhea" id="RHEA-COMP:10468"/>
        <dbReference type="ChEBI" id="CHEBI:30616"/>
        <dbReference type="ChEBI" id="CHEBI:33019"/>
        <dbReference type="ChEBI" id="CHEBI:37563"/>
        <dbReference type="ChEBI" id="CHEBI:74896"/>
        <dbReference type="ChEBI" id="CHEBI:83071"/>
        <dbReference type="EC" id="2.7.7.72"/>
    </reaction>
</comment>
<comment type="catalytic activity">
    <reaction evidence="1">
        <text>a tRNA with a 3' CCA end + 2 CTP + ATP = a tRNA with a 3' CCACCA end + 3 diphosphate</text>
        <dbReference type="Rhea" id="RHEA:76235"/>
        <dbReference type="Rhea" id="RHEA-COMP:10468"/>
        <dbReference type="Rhea" id="RHEA-COMP:18655"/>
        <dbReference type="ChEBI" id="CHEBI:30616"/>
        <dbReference type="ChEBI" id="CHEBI:33019"/>
        <dbReference type="ChEBI" id="CHEBI:37563"/>
        <dbReference type="ChEBI" id="CHEBI:83071"/>
        <dbReference type="ChEBI" id="CHEBI:195187"/>
    </reaction>
    <physiologicalReaction direction="left-to-right" evidence="1">
        <dbReference type="Rhea" id="RHEA:76236"/>
    </physiologicalReaction>
</comment>
<comment type="cofactor">
    <cofactor evidence="1">
        <name>Mg(2+)</name>
        <dbReference type="ChEBI" id="CHEBI:18420"/>
    </cofactor>
</comment>
<comment type="subunit">
    <text evidence="1">Homodimer.</text>
</comment>
<comment type="miscellaneous">
    <text evidence="1">A single active site specifically recognizes both ATP and CTP and is responsible for their addition.</text>
</comment>
<comment type="similarity">
    <text evidence="1">Belongs to the tRNA nucleotidyltransferase/poly(A) polymerase family. Bacterial CCA-adding enzyme type 3 subfamily.</text>
</comment>
<feature type="chain" id="PRO_1000054327" description="CCA-adding enzyme">
    <location>
        <begin position="1"/>
        <end position="402"/>
    </location>
</feature>
<feature type="binding site" evidence="1">
    <location>
        <position position="32"/>
    </location>
    <ligand>
        <name>ATP</name>
        <dbReference type="ChEBI" id="CHEBI:30616"/>
    </ligand>
</feature>
<feature type="binding site" evidence="1">
    <location>
        <position position="32"/>
    </location>
    <ligand>
        <name>CTP</name>
        <dbReference type="ChEBI" id="CHEBI:37563"/>
    </ligand>
</feature>
<feature type="binding site" evidence="1">
    <location>
        <position position="35"/>
    </location>
    <ligand>
        <name>ATP</name>
        <dbReference type="ChEBI" id="CHEBI:30616"/>
    </ligand>
</feature>
<feature type="binding site" evidence="1">
    <location>
        <position position="35"/>
    </location>
    <ligand>
        <name>CTP</name>
        <dbReference type="ChEBI" id="CHEBI:37563"/>
    </ligand>
</feature>
<feature type="binding site" evidence="1">
    <location>
        <position position="45"/>
    </location>
    <ligand>
        <name>Mg(2+)</name>
        <dbReference type="ChEBI" id="CHEBI:18420"/>
    </ligand>
</feature>
<feature type="binding site" evidence="1">
    <location>
        <position position="47"/>
    </location>
    <ligand>
        <name>Mg(2+)</name>
        <dbReference type="ChEBI" id="CHEBI:18420"/>
    </ligand>
</feature>
<feature type="binding site" evidence="1">
    <location>
        <position position="119"/>
    </location>
    <ligand>
        <name>ATP</name>
        <dbReference type="ChEBI" id="CHEBI:30616"/>
    </ligand>
</feature>
<feature type="binding site" evidence="1">
    <location>
        <position position="119"/>
    </location>
    <ligand>
        <name>CTP</name>
        <dbReference type="ChEBI" id="CHEBI:37563"/>
    </ligand>
</feature>
<feature type="binding site" evidence="1">
    <location>
        <position position="162"/>
    </location>
    <ligand>
        <name>ATP</name>
        <dbReference type="ChEBI" id="CHEBI:30616"/>
    </ligand>
</feature>
<feature type="binding site" evidence="1">
    <location>
        <position position="162"/>
    </location>
    <ligand>
        <name>CTP</name>
        <dbReference type="ChEBI" id="CHEBI:37563"/>
    </ligand>
</feature>
<feature type="binding site" evidence="1">
    <location>
        <position position="165"/>
    </location>
    <ligand>
        <name>ATP</name>
        <dbReference type="ChEBI" id="CHEBI:30616"/>
    </ligand>
</feature>
<feature type="binding site" evidence="1">
    <location>
        <position position="165"/>
    </location>
    <ligand>
        <name>CTP</name>
        <dbReference type="ChEBI" id="CHEBI:37563"/>
    </ligand>
</feature>
<feature type="binding site" evidence="1">
    <location>
        <position position="168"/>
    </location>
    <ligand>
        <name>ATP</name>
        <dbReference type="ChEBI" id="CHEBI:30616"/>
    </ligand>
</feature>
<feature type="binding site" evidence="1">
    <location>
        <position position="168"/>
    </location>
    <ligand>
        <name>CTP</name>
        <dbReference type="ChEBI" id="CHEBI:37563"/>
    </ligand>
</feature>
<feature type="binding site" evidence="1">
    <location>
        <position position="171"/>
    </location>
    <ligand>
        <name>ATP</name>
        <dbReference type="ChEBI" id="CHEBI:30616"/>
    </ligand>
</feature>
<feature type="binding site" evidence="1">
    <location>
        <position position="171"/>
    </location>
    <ligand>
        <name>CTP</name>
        <dbReference type="ChEBI" id="CHEBI:37563"/>
    </ligand>
</feature>
<gene>
    <name evidence="1" type="primary">cca</name>
    <name type="ordered locus">LACR_1653</name>
</gene>
<name>CCA_LACLS</name>
<reference key="1">
    <citation type="journal article" date="2006" name="Proc. Natl. Acad. Sci. U.S.A.">
        <title>Comparative genomics of the lactic acid bacteria.</title>
        <authorList>
            <person name="Makarova K.S."/>
            <person name="Slesarev A."/>
            <person name="Wolf Y.I."/>
            <person name="Sorokin A."/>
            <person name="Mirkin B."/>
            <person name="Koonin E.V."/>
            <person name="Pavlov A."/>
            <person name="Pavlova N."/>
            <person name="Karamychev V."/>
            <person name="Polouchine N."/>
            <person name="Shakhova V."/>
            <person name="Grigoriev I."/>
            <person name="Lou Y."/>
            <person name="Rohksar D."/>
            <person name="Lucas S."/>
            <person name="Huang K."/>
            <person name="Goodstein D.M."/>
            <person name="Hawkins T."/>
            <person name="Plengvidhya V."/>
            <person name="Welker D."/>
            <person name="Hughes J."/>
            <person name="Goh Y."/>
            <person name="Benson A."/>
            <person name="Baldwin K."/>
            <person name="Lee J.-H."/>
            <person name="Diaz-Muniz I."/>
            <person name="Dosti B."/>
            <person name="Smeianov V."/>
            <person name="Wechter W."/>
            <person name="Barabote R."/>
            <person name="Lorca G."/>
            <person name="Altermann E."/>
            <person name="Barrangou R."/>
            <person name="Ganesan B."/>
            <person name="Xie Y."/>
            <person name="Rawsthorne H."/>
            <person name="Tamir D."/>
            <person name="Parker C."/>
            <person name="Breidt F."/>
            <person name="Broadbent J.R."/>
            <person name="Hutkins R."/>
            <person name="O'Sullivan D."/>
            <person name="Steele J."/>
            <person name="Unlu G."/>
            <person name="Saier M.H. Jr."/>
            <person name="Klaenhammer T."/>
            <person name="Richardson P."/>
            <person name="Kozyavkin S."/>
            <person name="Weimer B.C."/>
            <person name="Mills D.A."/>
        </authorList>
    </citation>
    <scope>NUCLEOTIDE SEQUENCE [LARGE SCALE GENOMIC DNA]</scope>
    <source>
        <strain>SK11</strain>
    </source>
</reference>
<proteinExistence type="inferred from homology"/>
<accession>Q02Y22</accession>
<keyword id="KW-0067">ATP-binding</keyword>
<keyword id="KW-0460">Magnesium</keyword>
<keyword id="KW-0479">Metal-binding</keyword>
<keyword id="KW-0547">Nucleotide-binding</keyword>
<keyword id="KW-0548">Nucleotidyltransferase</keyword>
<keyword id="KW-0692">RNA repair</keyword>
<keyword id="KW-0694">RNA-binding</keyword>
<keyword id="KW-0808">Transferase</keyword>
<keyword id="KW-0819">tRNA processing</keyword>
<protein>
    <recommendedName>
        <fullName evidence="1">CCA-adding enzyme</fullName>
        <ecNumber evidence="1">2.7.7.72</ecNumber>
    </recommendedName>
    <alternativeName>
        <fullName evidence="1">CCA tRNA nucleotidyltransferase</fullName>
    </alternativeName>
    <alternativeName>
        <fullName evidence="1">tRNA CCA-pyrophosphorylase</fullName>
    </alternativeName>
    <alternativeName>
        <fullName evidence="1">tRNA adenylyl-/cytidylyl- transferase</fullName>
    </alternativeName>
    <alternativeName>
        <fullName evidence="1">tRNA nucleotidyltransferase</fullName>
    </alternativeName>
    <alternativeName>
        <fullName evidence="1">tRNA-NT</fullName>
    </alternativeName>
</protein>